<organism>
    <name type="scientific">Methylococcus capsulatus (strain ATCC 33009 / NCIMB 11132 / Bath)</name>
    <dbReference type="NCBI Taxonomy" id="243233"/>
    <lineage>
        <taxon>Bacteria</taxon>
        <taxon>Pseudomonadati</taxon>
        <taxon>Pseudomonadota</taxon>
        <taxon>Gammaproteobacteria</taxon>
        <taxon>Methylococcales</taxon>
        <taxon>Methylococcaceae</taxon>
        <taxon>Methylococcus</taxon>
    </lineage>
</organism>
<feature type="chain" id="PRO_0000092189" description="Cytochrome c biogenesis ATP-binding export protein CcmA">
    <location>
        <begin position="1"/>
        <end position="207"/>
    </location>
</feature>
<feature type="domain" description="ABC transporter" evidence="1">
    <location>
        <begin position="6"/>
        <end position="207"/>
    </location>
</feature>
<feature type="binding site" evidence="1">
    <location>
        <begin position="38"/>
        <end position="45"/>
    </location>
    <ligand>
        <name>ATP</name>
        <dbReference type="ChEBI" id="CHEBI:30616"/>
    </ligand>
</feature>
<keyword id="KW-0067">ATP-binding</keyword>
<keyword id="KW-0997">Cell inner membrane</keyword>
<keyword id="KW-1003">Cell membrane</keyword>
<keyword id="KW-0201">Cytochrome c-type biogenesis</keyword>
<keyword id="KW-0472">Membrane</keyword>
<keyword id="KW-0547">Nucleotide-binding</keyword>
<keyword id="KW-1185">Reference proteome</keyword>
<keyword id="KW-1278">Translocase</keyword>
<keyword id="KW-0813">Transport</keyword>
<evidence type="ECO:0000255" key="1">
    <source>
        <dbReference type="HAMAP-Rule" id="MF_01707"/>
    </source>
</evidence>
<evidence type="ECO:0000305" key="2"/>
<dbReference type="EC" id="7.6.2.5" evidence="1"/>
<dbReference type="EMBL" id="AE017282">
    <property type="protein sequence ID" value="AAU92747.1"/>
    <property type="status" value="ALT_INIT"/>
    <property type="molecule type" value="Genomic_DNA"/>
</dbReference>
<dbReference type="RefSeq" id="WP_026597610.1">
    <property type="nucleotide sequence ID" value="NC_002977.6"/>
</dbReference>
<dbReference type="SMR" id="Q60AB3"/>
<dbReference type="STRING" id="243233.MCA0954"/>
<dbReference type="GeneID" id="88223252"/>
<dbReference type="KEGG" id="mca:MCA0954"/>
<dbReference type="eggNOG" id="COG4133">
    <property type="taxonomic scope" value="Bacteria"/>
</dbReference>
<dbReference type="HOGENOM" id="CLU_000604_1_2_6"/>
<dbReference type="Proteomes" id="UP000006821">
    <property type="component" value="Chromosome"/>
</dbReference>
<dbReference type="GO" id="GO:0005886">
    <property type="term" value="C:plasma membrane"/>
    <property type="evidence" value="ECO:0007669"/>
    <property type="project" value="UniProtKB-SubCell"/>
</dbReference>
<dbReference type="GO" id="GO:0015439">
    <property type="term" value="F:ABC-type heme transporter activity"/>
    <property type="evidence" value="ECO:0007669"/>
    <property type="project" value="UniProtKB-EC"/>
</dbReference>
<dbReference type="GO" id="GO:0005524">
    <property type="term" value="F:ATP binding"/>
    <property type="evidence" value="ECO:0007669"/>
    <property type="project" value="UniProtKB-KW"/>
</dbReference>
<dbReference type="GO" id="GO:0016887">
    <property type="term" value="F:ATP hydrolysis activity"/>
    <property type="evidence" value="ECO:0007669"/>
    <property type="project" value="InterPro"/>
</dbReference>
<dbReference type="GO" id="GO:0017004">
    <property type="term" value="P:cytochrome complex assembly"/>
    <property type="evidence" value="ECO:0007669"/>
    <property type="project" value="UniProtKB-KW"/>
</dbReference>
<dbReference type="Gene3D" id="3.40.50.300">
    <property type="entry name" value="P-loop containing nucleotide triphosphate hydrolases"/>
    <property type="match status" value="1"/>
</dbReference>
<dbReference type="InterPro" id="IPR003593">
    <property type="entry name" value="AAA+_ATPase"/>
</dbReference>
<dbReference type="InterPro" id="IPR003439">
    <property type="entry name" value="ABC_transporter-like_ATP-bd"/>
</dbReference>
<dbReference type="InterPro" id="IPR005895">
    <property type="entry name" value="ABC_transptr_haem_export_CcmA"/>
</dbReference>
<dbReference type="InterPro" id="IPR027417">
    <property type="entry name" value="P-loop_NTPase"/>
</dbReference>
<dbReference type="NCBIfam" id="TIGR01189">
    <property type="entry name" value="ccmA"/>
    <property type="match status" value="1"/>
</dbReference>
<dbReference type="NCBIfam" id="NF010061">
    <property type="entry name" value="PRK13538.1"/>
    <property type="match status" value="1"/>
</dbReference>
<dbReference type="PANTHER" id="PTHR43499">
    <property type="entry name" value="ABC TRANSPORTER I FAMILY MEMBER 1"/>
    <property type="match status" value="1"/>
</dbReference>
<dbReference type="PANTHER" id="PTHR43499:SF1">
    <property type="entry name" value="ABC TRANSPORTER I FAMILY MEMBER 1"/>
    <property type="match status" value="1"/>
</dbReference>
<dbReference type="Pfam" id="PF00005">
    <property type="entry name" value="ABC_tran"/>
    <property type="match status" value="1"/>
</dbReference>
<dbReference type="SMART" id="SM00382">
    <property type="entry name" value="AAA"/>
    <property type="match status" value="1"/>
</dbReference>
<dbReference type="SUPFAM" id="SSF52540">
    <property type="entry name" value="P-loop containing nucleoside triphosphate hydrolases"/>
    <property type="match status" value="1"/>
</dbReference>
<dbReference type="PROSITE" id="PS50893">
    <property type="entry name" value="ABC_TRANSPORTER_2"/>
    <property type="match status" value="1"/>
</dbReference>
<dbReference type="PROSITE" id="PS51243">
    <property type="entry name" value="CCMA"/>
    <property type="match status" value="1"/>
</dbReference>
<sequence length="207" mass="22484">MSDAPLCAEGLECIRGDRLLFSGLNLTLSPGQLLQVEGANGAGKTSLLRVLAGLSRPAEGEVRWRGLDIQHHRASYFTEMVYMGHAPGLKAELSPLENLRVSVALRGRMADEARIDDALARVGLRGFEDVPARGLSAGQKQRTALCRLLLDPVPLWILDEPFTALDVRGIALVRELLEFHLANGGMALMTSHHALDVRGDCRSLNLS</sequence>
<accession>Q60AB3</accession>
<gene>
    <name evidence="1" type="primary">ccmA</name>
    <name type="ordered locus">MCA0954</name>
</gene>
<protein>
    <recommendedName>
        <fullName evidence="1">Cytochrome c biogenesis ATP-binding export protein CcmA</fullName>
        <ecNumber evidence="1">7.6.2.5</ecNumber>
    </recommendedName>
    <alternativeName>
        <fullName evidence="1">Heme exporter protein A</fullName>
    </alternativeName>
</protein>
<name>CCMA_METCA</name>
<proteinExistence type="inferred from homology"/>
<comment type="function">
    <text evidence="1">Part of the ABC transporter complex CcmAB involved in the biogenesis of c-type cytochromes; once thought to export heme, this seems not to be the case, but its exact role is uncertain. Responsible for energy coupling to the transport system.</text>
</comment>
<comment type="catalytic activity">
    <reaction evidence="1">
        <text>heme b(in) + ATP + H2O = heme b(out) + ADP + phosphate + H(+)</text>
        <dbReference type="Rhea" id="RHEA:19261"/>
        <dbReference type="ChEBI" id="CHEBI:15377"/>
        <dbReference type="ChEBI" id="CHEBI:15378"/>
        <dbReference type="ChEBI" id="CHEBI:30616"/>
        <dbReference type="ChEBI" id="CHEBI:43474"/>
        <dbReference type="ChEBI" id="CHEBI:60344"/>
        <dbReference type="ChEBI" id="CHEBI:456216"/>
        <dbReference type="EC" id="7.6.2.5"/>
    </reaction>
</comment>
<comment type="subunit">
    <text evidence="1">The complex is composed of two ATP-binding proteins (CcmA) and two transmembrane proteins (CcmB).</text>
</comment>
<comment type="subcellular location">
    <subcellularLocation>
        <location evidence="1">Cell inner membrane</location>
        <topology evidence="1">Peripheral membrane protein</topology>
    </subcellularLocation>
</comment>
<comment type="similarity">
    <text evidence="1">Belongs to the ABC transporter superfamily. CcmA exporter (TC 3.A.1.107) family.</text>
</comment>
<comment type="sequence caution" evidence="2">
    <conflict type="erroneous initiation">
        <sequence resource="EMBL-CDS" id="AAU92747"/>
    </conflict>
</comment>
<reference key="1">
    <citation type="journal article" date="2004" name="PLoS Biol.">
        <title>Genomic insights into methanotrophy: the complete genome sequence of Methylococcus capsulatus (Bath).</title>
        <authorList>
            <person name="Ward N.L."/>
            <person name="Larsen O."/>
            <person name="Sakwa J."/>
            <person name="Bruseth L."/>
            <person name="Khouri H.M."/>
            <person name="Durkin A.S."/>
            <person name="Dimitrov G."/>
            <person name="Jiang L."/>
            <person name="Scanlan D."/>
            <person name="Kang K.H."/>
            <person name="Lewis M.R."/>
            <person name="Nelson K.E."/>
            <person name="Methe B.A."/>
            <person name="Wu M."/>
            <person name="Heidelberg J.F."/>
            <person name="Paulsen I.T."/>
            <person name="Fouts D.E."/>
            <person name="Ravel J."/>
            <person name="Tettelin H."/>
            <person name="Ren Q."/>
            <person name="Read T.D."/>
            <person name="DeBoy R.T."/>
            <person name="Seshadri R."/>
            <person name="Salzberg S.L."/>
            <person name="Jensen H.B."/>
            <person name="Birkeland N.K."/>
            <person name="Nelson W.C."/>
            <person name="Dodson R.J."/>
            <person name="Grindhaug S.H."/>
            <person name="Holt I.E."/>
            <person name="Eidhammer I."/>
            <person name="Jonasen I."/>
            <person name="Vanaken S."/>
            <person name="Utterback T.R."/>
            <person name="Feldblyum T.V."/>
            <person name="Fraser C.M."/>
            <person name="Lillehaug J.R."/>
            <person name="Eisen J.A."/>
        </authorList>
    </citation>
    <scope>NUCLEOTIDE SEQUENCE [LARGE SCALE GENOMIC DNA]</scope>
    <source>
        <strain>ATCC 33009 / NCIMB 11132 / Bath</strain>
    </source>
</reference>